<evidence type="ECO:0000255" key="1">
    <source>
        <dbReference type="HAMAP-Rule" id="MF_00120"/>
    </source>
</evidence>
<name>GATA_BURCM</name>
<feature type="chain" id="PRO_1000015807" description="Glutamyl-tRNA(Gln) amidotransferase subunit A">
    <location>
        <begin position="1"/>
        <end position="496"/>
    </location>
</feature>
<feature type="active site" description="Charge relay system" evidence="1">
    <location>
        <position position="75"/>
    </location>
</feature>
<feature type="active site" description="Charge relay system" evidence="1">
    <location>
        <position position="150"/>
    </location>
</feature>
<feature type="active site" description="Acyl-ester intermediate" evidence="1">
    <location>
        <position position="174"/>
    </location>
</feature>
<reference key="1">
    <citation type="submission" date="2006-08" db="EMBL/GenBank/DDBJ databases">
        <title>Complete sequence of chromosome 1 of Burkholderia cepacia AMMD.</title>
        <authorList>
            <person name="Copeland A."/>
            <person name="Lucas S."/>
            <person name="Lapidus A."/>
            <person name="Barry K."/>
            <person name="Detter J.C."/>
            <person name="Glavina del Rio T."/>
            <person name="Hammon N."/>
            <person name="Israni S."/>
            <person name="Pitluck S."/>
            <person name="Bruce D."/>
            <person name="Chain P."/>
            <person name="Malfatti S."/>
            <person name="Shin M."/>
            <person name="Vergez L."/>
            <person name="Schmutz J."/>
            <person name="Larimer F."/>
            <person name="Land M."/>
            <person name="Hauser L."/>
            <person name="Kyrpides N."/>
            <person name="Kim E."/>
            <person name="Parke J."/>
            <person name="Coenye T."/>
            <person name="Konstantinidis K."/>
            <person name="Ramette A."/>
            <person name="Tiedje J."/>
            <person name="Richardson P."/>
        </authorList>
    </citation>
    <scope>NUCLEOTIDE SEQUENCE [LARGE SCALE GENOMIC DNA]</scope>
    <source>
        <strain>ATCC BAA-244 / DSM 16087 / CCUG 44356 / LMG 19182 / AMMD</strain>
    </source>
</reference>
<protein>
    <recommendedName>
        <fullName evidence="1">Glutamyl-tRNA(Gln) amidotransferase subunit A</fullName>
        <shortName evidence="1">Glu-ADT subunit A</shortName>
        <ecNumber evidence="1">6.3.5.7</ecNumber>
    </recommendedName>
</protein>
<sequence>MHAKSLTELRAALAAKECSAVELAQLYLKRIDAARDLNAFVHVDADLTLAQAKAADAELARGAGGALTGLPIAHKDVFVTRGWRSTAGSKMLANYESPFDATVVARLQAAGMVTLGKTNMDEFAMGSSNENSAFGAVKNPWDTNAVPGGSSGGSSAAVAARLAPAATGTDTGGSIRQPASFAGVTGIKPTYGRVSRYGMIAFASSLDQGGPMAQSASDCALLLNAMSGFDERDSTSLEREDEDFTRHLGQPWAAGNDAGKPLAGLRIGLPNEYFGDGLADDVRASIDAALKQYEALGATLVPVSLPKTELSIPVYYVIAPAEASSNLSRFDGVRFGHRAAQYGDLLDMYKKSRAEGFGPEVKRRILVGAYVLSHGYYDAYYLQAQKIRRIIAQDFQEAFKSCDVIMGPASPTVAWDLGSKGDDPVQMYLADIYTLSVSLAGLPGMSVPCGFGASANAKRPVGLQIIGNYFNEARMLQVADAFQRATDWHKQVPAGV</sequence>
<keyword id="KW-0067">ATP-binding</keyword>
<keyword id="KW-0436">Ligase</keyword>
<keyword id="KW-0547">Nucleotide-binding</keyword>
<keyword id="KW-0648">Protein biosynthesis</keyword>
<gene>
    <name evidence="1" type="primary">gatA</name>
    <name type="ordered locus">Bamb_3163</name>
</gene>
<proteinExistence type="inferred from homology"/>
<accession>Q0BAV4</accession>
<comment type="function">
    <text evidence="1">Allows the formation of correctly charged Gln-tRNA(Gln) through the transamidation of misacylated Glu-tRNA(Gln) in organisms which lack glutaminyl-tRNA synthetase. The reaction takes place in the presence of glutamine and ATP through an activated gamma-phospho-Glu-tRNA(Gln).</text>
</comment>
<comment type="catalytic activity">
    <reaction evidence="1">
        <text>L-glutamyl-tRNA(Gln) + L-glutamine + ATP + H2O = L-glutaminyl-tRNA(Gln) + L-glutamate + ADP + phosphate + H(+)</text>
        <dbReference type="Rhea" id="RHEA:17521"/>
        <dbReference type="Rhea" id="RHEA-COMP:9681"/>
        <dbReference type="Rhea" id="RHEA-COMP:9684"/>
        <dbReference type="ChEBI" id="CHEBI:15377"/>
        <dbReference type="ChEBI" id="CHEBI:15378"/>
        <dbReference type="ChEBI" id="CHEBI:29985"/>
        <dbReference type="ChEBI" id="CHEBI:30616"/>
        <dbReference type="ChEBI" id="CHEBI:43474"/>
        <dbReference type="ChEBI" id="CHEBI:58359"/>
        <dbReference type="ChEBI" id="CHEBI:78520"/>
        <dbReference type="ChEBI" id="CHEBI:78521"/>
        <dbReference type="ChEBI" id="CHEBI:456216"/>
        <dbReference type="EC" id="6.3.5.7"/>
    </reaction>
</comment>
<comment type="subunit">
    <text evidence="1">Heterotrimer of A, B and C subunits.</text>
</comment>
<comment type="similarity">
    <text evidence="1">Belongs to the amidase family. GatA subfamily.</text>
</comment>
<dbReference type="EC" id="6.3.5.7" evidence="1"/>
<dbReference type="EMBL" id="CP000440">
    <property type="protein sequence ID" value="ABI88719.1"/>
    <property type="molecule type" value="Genomic_DNA"/>
</dbReference>
<dbReference type="RefSeq" id="WP_011658222.1">
    <property type="nucleotide sequence ID" value="NC_008390.1"/>
</dbReference>
<dbReference type="SMR" id="Q0BAV4"/>
<dbReference type="GeneID" id="93084645"/>
<dbReference type="KEGG" id="bam:Bamb_3163"/>
<dbReference type="PATRIC" id="fig|339670.21.peg.1696"/>
<dbReference type="eggNOG" id="COG0154">
    <property type="taxonomic scope" value="Bacteria"/>
</dbReference>
<dbReference type="Proteomes" id="UP000000662">
    <property type="component" value="Chromosome 1"/>
</dbReference>
<dbReference type="GO" id="GO:0030956">
    <property type="term" value="C:glutamyl-tRNA(Gln) amidotransferase complex"/>
    <property type="evidence" value="ECO:0007669"/>
    <property type="project" value="InterPro"/>
</dbReference>
<dbReference type="GO" id="GO:0005524">
    <property type="term" value="F:ATP binding"/>
    <property type="evidence" value="ECO:0007669"/>
    <property type="project" value="UniProtKB-KW"/>
</dbReference>
<dbReference type="GO" id="GO:0050567">
    <property type="term" value="F:glutaminyl-tRNA synthase (glutamine-hydrolyzing) activity"/>
    <property type="evidence" value="ECO:0007669"/>
    <property type="project" value="UniProtKB-UniRule"/>
</dbReference>
<dbReference type="GO" id="GO:0006412">
    <property type="term" value="P:translation"/>
    <property type="evidence" value="ECO:0007669"/>
    <property type="project" value="UniProtKB-UniRule"/>
</dbReference>
<dbReference type="Gene3D" id="3.90.1300.10">
    <property type="entry name" value="Amidase signature (AS) domain"/>
    <property type="match status" value="1"/>
</dbReference>
<dbReference type="HAMAP" id="MF_00120">
    <property type="entry name" value="GatA"/>
    <property type="match status" value="1"/>
</dbReference>
<dbReference type="InterPro" id="IPR000120">
    <property type="entry name" value="Amidase"/>
</dbReference>
<dbReference type="InterPro" id="IPR020556">
    <property type="entry name" value="Amidase_CS"/>
</dbReference>
<dbReference type="InterPro" id="IPR023631">
    <property type="entry name" value="Amidase_dom"/>
</dbReference>
<dbReference type="InterPro" id="IPR036928">
    <property type="entry name" value="AS_sf"/>
</dbReference>
<dbReference type="InterPro" id="IPR004412">
    <property type="entry name" value="GatA"/>
</dbReference>
<dbReference type="NCBIfam" id="TIGR00132">
    <property type="entry name" value="gatA"/>
    <property type="match status" value="1"/>
</dbReference>
<dbReference type="PANTHER" id="PTHR11895:SF151">
    <property type="entry name" value="GLUTAMYL-TRNA(GLN) AMIDOTRANSFERASE SUBUNIT A"/>
    <property type="match status" value="1"/>
</dbReference>
<dbReference type="PANTHER" id="PTHR11895">
    <property type="entry name" value="TRANSAMIDASE"/>
    <property type="match status" value="1"/>
</dbReference>
<dbReference type="Pfam" id="PF01425">
    <property type="entry name" value="Amidase"/>
    <property type="match status" value="1"/>
</dbReference>
<dbReference type="SUPFAM" id="SSF75304">
    <property type="entry name" value="Amidase signature (AS) enzymes"/>
    <property type="match status" value="1"/>
</dbReference>
<dbReference type="PROSITE" id="PS00571">
    <property type="entry name" value="AMIDASES"/>
    <property type="match status" value="1"/>
</dbReference>
<organism>
    <name type="scientific">Burkholderia ambifaria (strain ATCC BAA-244 / DSM 16087 / CCUG 44356 / LMG 19182 / AMMD)</name>
    <name type="common">Burkholderia cepacia (strain AMMD)</name>
    <dbReference type="NCBI Taxonomy" id="339670"/>
    <lineage>
        <taxon>Bacteria</taxon>
        <taxon>Pseudomonadati</taxon>
        <taxon>Pseudomonadota</taxon>
        <taxon>Betaproteobacteria</taxon>
        <taxon>Burkholderiales</taxon>
        <taxon>Burkholderiaceae</taxon>
        <taxon>Burkholderia</taxon>
        <taxon>Burkholderia cepacia complex</taxon>
    </lineage>
</organism>